<gene>
    <name evidence="1" type="primary">trmD</name>
    <name type="ordered locus">Shal_1099</name>
</gene>
<keyword id="KW-0963">Cytoplasm</keyword>
<keyword id="KW-0489">Methyltransferase</keyword>
<keyword id="KW-0949">S-adenosyl-L-methionine</keyword>
<keyword id="KW-0808">Transferase</keyword>
<keyword id="KW-0819">tRNA processing</keyword>
<organism>
    <name type="scientific">Shewanella halifaxensis (strain HAW-EB4)</name>
    <dbReference type="NCBI Taxonomy" id="458817"/>
    <lineage>
        <taxon>Bacteria</taxon>
        <taxon>Pseudomonadati</taxon>
        <taxon>Pseudomonadota</taxon>
        <taxon>Gammaproteobacteria</taxon>
        <taxon>Alteromonadales</taxon>
        <taxon>Shewanellaceae</taxon>
        <taxon>Shewanella</taxon>
    </lineage>
</organism>
<name>TRMD_SHEHH</name>
<sequence>MWLGVVTLFPEMFRAVTDFGVTGRAVSKGLLELQTWNPRDFTHDKHKTVDDRPYGGGPGMLMMVQPLRDAIHAAKAAAGKEAKVIYLSPQGRKLTQQGVEELAKSSSLVLVCGRYEGVDERIIQTEVDEEWSIGDYVLSGGELPAMTLIDSVSRLVPGVLGKQASAEQDSFSDGLLDCPHYTRPESLDGLDVPAVLLSGNHEHIRRWRLQQSLGRTLLRRPELLENLALTGEQEKLLADFVDTIKQDD</sequence>
<evidence type="ECO:0000255" key="1">
    <source>
        <dbReference type="HAMAP-Rule" id="MF_00605"/>
    </source>
</evidence>
<proteinExistence type="inferred from homology"/>
<comment type="function">
    <text evidence="1">Specifically methylates guanosine-37 in various tRNAs.</text>
</comment>
<comment type="catalytic activity">
    <reaction evidence="1">
        <text>guanosine(37) in tRNA + S-adenosyl-L-methionine = N(1)-methylguanosine(37) in tRNA + S-adenosyl-L-homocysteine + H(+)</text>
        <dbReference type="Rhea" id="RHEA:36899"/>
        <dbReference type="Rhea" id="RHEA-COMP:10145"/>
        <dbReference type="Rhea" id="RHEA-COMP:10147"/>
        <dbReference type="ChEBI" id="CHEBI:15378"/>
        <dbReference type="ChEBI" id="CHEBI:57856"/>
        <dbReference type="ChEBI" id="CHEBI:59789"/>
        <dbReference type="ChEBI" id="CHEBI:73542"/>
        <dbReference type="ChEBI" id="CHEBI:74269"/>
        <dbReference type="EC" id="2.1.1.228"/>
    </reaction>
</comment>
<comment type="subunit">
    <text evidence="1">Homodimer.</text>
</comment>
<comment type="subcellular location">
    <subcellularLocation>
        <location evidence="1">Cytoplasm</location>
    </subcellularLocation>
</comment>
<comment type="similarity">
    <text evidence="1">Belongs to the RNA methyltransferase TrmD family.</text>
</comment>
<accession>B0TJ77</accession>
<feature type="chain" id="PRO_1000082535" description="tRNA (guanine-N(1)-)-methyltransferase">
    <location>
        <begin position="1"/>
        <end position="248"/>
    </location>
</feature>
<feature type="binding site" evidence="1">
    <location>
        <position position="113"/>
    </location>
    <ligand>
        <name>S-adenosyl-L-methionine</name>
        <dbReference type="ChEBI" id="CHEBI:59789"/>
    </ligand>
</feature>
<feature type="binding site" evidence="1">
    <location>
        <begin position="133"/>
        <end position="138"/>
    </location>
    <ligand>
        <name>S-adenosyl-L-methionine</name>
        <dbReference type="ChEBI" id="CHEBI:59789"/>
    </ligand>
</feature>
<protein>
    <recommendedName>
        <fullName evidence="1">tRNA (guanine-N(1)-)-methyltransferase</fullName>
        <ecNumber evidence="1">2.1.1.228</ecNumber>
    </recommendedName>
    <alternativeName>
        <fullName evidence="1">M1G-methyltransferase</fullName>
    </alternativeName>
    <alternativeName>
        <fullName evidence="1">tRNA [GM37] methyltransferase</fullName>
    </alternativeName>
</protein>
<reference key="1">
    <citation type="submission" date="2008-01" db="EMBL/GenBank/DDBJ databases">
        <title>Complete sequence of Shewanella halifaxensis HAW-EB4.</title>
        <authorList>
            <consortium name="US DOE Joint Genome Institute"/>
            <person name="Copeland A."/>
            <person name="Lucas S."/>
            <person name="Lapidus A."/>
            <person name="Glavina del Rio T."/>
            <person name="Dalin E."/>
            <person name="Tice H."/>
            <person name="Bruce D."/>
            <person name="Goodwin L."/>
            <person name="Pitluck S."/>
            <person name="Sims D."/>
            <person name="Brettin T."/>
            <person name="Detter J.C."/>
            <person name="Han C."/>
            <person name="Kuske C.R."/>
            <person name="Schmutz J."/>
            <person name="Larimer F."/>
            <person name="Land M."/>
            <person name="Hauser L."/>
            <person name="Kyrpides N."/>
            <person name="Kim E."/>
            <person name="Zhao J.-S."/>
            <person name="Richardson P."/>
        </authorList>
    </citation>
    <scope>NUCLEOTIDE SEQUENCE [LARGE SCALE GENOMIC DNA]</scope>
    <source>
        <strain>HAW-EB4</strain>
    </source>
</reference>
<dbReference type="EC" id="2.1.1.228" evidence="1"/>
<dbReference type="EMBL" id="CP000931">
    <property type="protein sequence ID" value="ABZ75668.1"/>
    <property type="molecule type" value="Genomic_DNA"/>
</dbReference>
<dbReference type="RefSeq" id="WP_012276213.1">
    <property type="nucleotide sequence ID" value="NC_010334.1"/>
</dbReference>
<dbReference type="SMR" id="B0TJ77"/>
<dbReference type="STRING" id="458817.Shal_1099"/>
<dbReference type="KEGG" id="shl:Shal_1099"/>
<dbReference type="eggNOG" id="COG0336">
    <property type="taxonomic scope" value="Bacteria"/>
</dbReference>
<dbReference type="HOGENOM" id="CLU_047363_0_1_6"/>
<dbReference type="OrthoDB" id="9807416at2"/>
<dbReference type="Proteomes" id="UP000001317">
    <property type="component" value="Chromosome"/>
</dbReference>
<dbReference type="GO" id="GO:0005829">
    <property type="term" value="C:cytosol"/>
    <property type="evidence" value="ECO:0007669"/>
    <property type="project" value="TreeGrafter"/>
</dbReference>
<dbReference type="GO" id="GO:0052906">
    <property type="term" value="F:tRNA (guanine(37)-N1)-methyltransferase activity"/>
    <property type="evidence" value="ECO:0007669"/>
    <property type="project" value="UniProtKB-UniRule"/>
</dbReference>
<dbReference type="GO" id="GO:0002939">
    <property type="term" value="P:tRNA N1-guanine methylation"/>
    <property type="evidence" value="ECO:0007669"/>
    <property type="project" value="TreeGrafter"/>
</dbReference>
<dbReference type="CDD" id="cd18080">
    <property type="entry name" value="TrmD-like"/>
    <property type="match status" value="1"/>
</dbReference>
<dbReference type="FunFam" id="1.10.1270.20:FF:000001">
    <property type="entry name" value="tRNA (guanine-N(1)-)-methyltransferase"/>
    <property type="match status" value="1"/>
</dbReference>
<dbReference type="FunFam" id="3.40.1280.10:FF:000001">
    <property type="entry name" value="tRNA (guanine-N(1)-)-methyltransferase"/>
    <property type="match status" value="1"/>
</dbReference>
<dbReference type="Gene3D" id="3.40.1280.10">
    <property type="match status" value="1"/>
</dbReference>
<dbReference type="Gene3D" id="1.10.1270.20">
    <property type="entry name" value="tRNA(m1g37)methyltransferase, domain 2"/>
    <property type="match status" value="1"/>
</dbReference>
<dbReference type="HAMAP" id="MF_00605">
    <property type="entry name" value="TrmD"/>
    <property type="match status" value="1"/>
</dbReference>
<dbReference type="InterPro" id="IPR029028">
    <property type="entry name" value="Alpha/beta_knot_MTases"/>
</dbReference>
<dbReference type="InterPro" id="IPR023148">
    <property type="entry name" value="tRNA_m1G_MeTrfase_C_sf"/>
</dbReference>
<dbReference type="InterPro" id="IPR002649">
    <property type="entry name" value="tRNA_m1G_MeTrfase_TrmD"/>
</dbReference>
<dbReference type="InterPro" id="IPR029026">
    <property type="entry name" value="tRNA_m1G_MTases_N"/>
</dbReference>
<dbReference type="InterPro" id="IPR016009">
    <property type="entry name" value="tRNA_MeTrfase_TRMD/TRM10"/>
</dbReference>
<dbReference type="NCBIfam" id="NF000648">
    <property type="entry name" value="PRK00026.1"/>
    <property type="match status" value="1"/>
</dbReference>
<dbReference type="NCBIfam" id="TIGR00088">
    <property type="entry name" value="trmD"/>
    <property type="match status" value="1"/>
</dbReference>
<dbReference type="PANTHER" id="PTHR46417">
    <property type="entry name" value="TRNA (GUANINE-N(1)-)-METHYLTRANSFERASE"/>
    <property type="match status" value="1"/>
</dbReference>
<dbReference type="PANTHER" id="PTHR46417:SF1">
    <property type="entry name" value="TRNA (GUANINE-N(1)-)-METHYLTRANSFERASE"/>
    <property type="match status" value="1"/>
</dbReference>
<dbReference type="Pfam" id="PF01746">
    <property type="entry name" value="tRNA_m1G_MT"/>
    <property type="match status" value="1"/>
</dbReference>
<dbReference type="PIRSF" id="PIRSF000386">
    <property type="entry name" value="tRNA_mtase"/>
    <property type="match status" value="1"/>
</dbReference>
<dbReference type="SUPFAM" id="SSF75217">
    <property type="entry name" value="alpha/beta knot"/>
    <property type="match status" value="1"/>
</dbReference>